<comment type="function">
    <text evidence="1">Channel that opens in response to stretch forces in the membrane lipid bilayer. May participate in the regulation of osmotic pressure changes within the cell.</text>
</comment>
<comment type="subunit">
    <text evidence="1">Homopentamer.</text>
</comment>
<comment type="subcellular location">
    <subcellularLocation>
        <location evidence="1">Cell membrane</location>
        <topology evidence="1">Multi-pass membrane protein</topology>
    </subcellularLocation>
</comment>
<comment type="similarity">
    <text evidence="1">Belongs to the MscL family.</text>
</comment>
<name>MSCL_MACCJ</name>
<dbReference type="EMBL" id="AP009484">
    <property type="protein sequence ID" value="BAH17713.1"/>
    <property type="molecule type" value="Genomic_DNA"/>
</dbReference>
<dbReference type="RefSeq" id="WP_012656911.1">
    <property type="nucleotide sequence ID" value="NC_011999.1"/>
</dbReference>
<dbReference type="SMR" id="B9EBV2"/>
<dbReference type="STRING" id="458233.MCCL_1006"/>
<dbReference type="KEGG" id="mcl:MCCL_1006"/>
<dbReference type="eggNOG" id="COG1970">
    <property type="taxonomic scope" value="Bacteria"/>
</dbReference>
<dbReference type="HOGENOM" id="CLU_095787_0_0_9"/>
<dbReference type="OrthoDB" id="9810350at2"/>
<dbReference type="Proteomes" id="UP000001383">
    <property type="component" value="Chromosome"/>
</dbReference>
<dbReference type="GO" id="GO:0005886">
    <property type="term" value="C:plasma membrane"/>
    <property type="evidence" value="ECO:0007669"/>
    <property type="project" value="UniProtKB-SubCell"/>
</dbReference>
<dbReference type="GO" id="GO:0008381">
    <property type="term" value="F:mechanosensitive monoatomic ion channel activity"/>
    <property type="evidence" value="ECO:0007669"/>
    <property type="project" value="UniProtKB-UniRule"/>
</dbReference>
<dbReference type="Gene3D" id="1.10.1200.120">
    <property type="entry name" value="Large-conductance mechanosensitive channel, MscL, domain 1"/>
    <property type="match status" value="1"/>
</dbReference>
<dbReference type="HAMAP" id="MF_00115">
    <property type="entry name" value="MscL"/>
    <property type="match status" value="1"/>
</dbReference>
<dbReference type="InterPro" id="IPR019823">
    <property type="entry name" value="Mechanosensitive_channel_CS"/>
</dbReference>
<dbReference type="InterPro" id="IPR001185">
    <property type="entry name" value="MS_channel"/>
</dbReference>
<dbReference type="InterPro" id="IPR037673">
    <property type="entry name" value="MSC/AndL"/>
</dbReference>
<dbReference type="InterPro" id="IPR036019">
    <property type="entry name" value="MscL_channel"/>
</dbReference>
<dbReference type="NCBIfam" id="TIGR00220">
    <property type="entry name" value="mscL"/>
    <property type="match status" value="1"/>
</dbReference>
<dbReference type="NCBIfam" id="NF010559">
    <property type="entry name" value="PRK13954.1"/>
    <property type="match status" value="1"/>
</dbReference>
<dbReference type="PANTHER" id="PTHR30266:SF2">
    <property type="entry name" value="LARGE-CONDUCTANCE MECHANOSENSITIVE CHANNEL"/>
    <property type="match status" value="1"/>
</dbReference>
<dbReference type="PANTHER" id="PTHR30266">
    <property type="entry name" value="MECHANOSENSITIVE CHANNEL MSCL"/>
    <property type="match status" value="1"/>
</dbReference>
<dbReference type="Pfam" id="PF01741">
    <property type="entry name" value="MscL"/>
    <property type="match status" value="1"/>
</dbReference>
<dbReference type="PRINTS" id="PR01264">
    <property type="entry name" value="MECHCHANNEL"/>
</dbReference>
<dbReference type="SUPFAM" id="SSF81330">
    <property type="entry name" value="Gated mechanosensitive channel"/>
    <property type="match status" value="1"/>
</dbReference>
<dbReference type="PROSITE" id="PS01327">
    <property type="entry name" value="MSCL"/>
    <property type="match status" value="1"/>
</dbReference>
<gene>
    <name evidence="1" type="primary">mscL</name>
    <name type="ordered locus">MCCL_1006</name>
</gene>
<evidence type="ECO:0000255" key="1">
    <source>
        <dbReference type="HAMAP-Rule" id="MF_00115"/>
    </source>
</evidence>
<protein>
    <recommendedName>
        <fullName evidence="1">Large-conductance mechanosensitive channel</fullName>
    </recommendedName>
</protein>
<reference key="1">
    <citation type="journal article" date="2009" name="J. Bacteriol.">
        <title>Complete genome sequence of Macrococcus caseolyticus strain JCSCS5402, reflecting the ancestral genome of the human-pathogenic staphylococci.</title>
        <authorList>
            <person name="Baba T."/>
            <person name="Kuwahara-Arai K."/>
            <person name="Uchiyama I."/>
            <person name="Takeuchi F."/>
            <person name="Ito T."/>
            <person name="Hiramatsu K."/>
        </authorList>
    </citation>
    <scope>NUCLEOTIDE SEQUENCE [LARGE SCALE GENOMIC DNA]</scope>
    <source>
        <strain>JCSC5402</strain>
    </source>
</reference>
<accession>B9EBV2</accession>
<keyword id="KW-1003">Cell membrane</keyword>
<keyword id="KW-0407">Ion channel</keyword>
<keyword id="KW-0406">Ion transport</keyword>
<keyword id="KW-0472">Membrane</keyword>
<keyword id="KW-1185">Reference proteome</keyword>
<keyword id="KW-0812">Transmembrane</keyword>
<keyword id="KW-1133">Transmembrane helix</keyword>
<keyword id="KW-0813">Transport</keyword>
<sequence length="122" mass="13411">MSLLKEFKEFAVKGNVLDLAVAVVIGAAFGKIVSSLVADVIMPIIGLIFGNTDFASSWAYKGIKYGVFIQSIVDFLIVAGAIFLFIKLINKITRKSEVEEVEEAVEENTVLLTEIRDLLRSK</sequence>
<proteinExistence type="inferred from homology"/>
<feature type="chain" id="PRO_1000191377" description="Large-conductance mechanosensitive channel">
    <location>
        <begin position="1"/>
        <end position="122"/>
    </location>
</feature>
<feature type="transmembrane region" description="Helical" evidence="1">
    <location>
        <begin position="29"/>
        <end position="49"/>
    </location>
</feature>
<feature type="transmembrane region" description="Helical" evidence="1">
    <location>
        <begin position="66"/>
        <end position="86"/>
    </location>
</feature>
<organism>
    <name type="scientific">Macrococcus caseolyticus (strain JCSC5402)</name>
    <name type="common">Macrococcoides caseolyticum</name>
    <dbReference type="NCBI Taxonomy" id="458233"/>
    <lineage>
        <taxon>Bacteria</taxon>
        <taxon>Bacillati</taxon>
        <taxon>Bacillota</taxon>
        <taxon>Bacilli</taxon>
        <taxon>Bacillales</taxon>
        <taxon>Staphylococcaceae</taxon>
        <taxon>Macrococcoides</taxon>
    </lineage>
</organism>